<name>RIMM_PARP8</name>
<organism>
    <name type="scientific">Paraburkholderia phymatum (strain DSM 17167 / CIP 108236 / LMG 21445 / STM815)</name>
    <name type="common">Burkholderia phymatum</name>
    <dbReference type="NCBI Taxonomy" id="391038"/>
    <lineage>
        <taxon>Bacteria</taxon>
        <taxon>Pseudomonadati</taxon>
        <taxon>Pseudomonadota</taxon>
        <taxon>Betaproteobacteria</taxon>
        <taxon>Burkholderiales</taxon>
        <taxon>Burkholderiaceae</taxon>
        <taxon>Paraburkholderia</taxon>
    </lineage>
</organism>
<comment type="function">
    <text evidence="1">An accessory protein needed during the final step in the assembly of 30S ribosomal subunit, possibly for assembly of the head region. Essential for efficient processing of 16S rRNA. May be needed both before and after RbfA during the maturation of 16S rRNA. It has affinity for free ribosomal 30S subunits but not for 70S ribosomes.</text>
</comment>
<comment type="subunit">
    <text evidence="1">Binds ribosomal protein uS19.</text>
</comment>
<comment type="subcellular location">
    <subcellularLocation>
        <location evidence="1">Cytoplasm</location>
    </subcellularLocation>
</comment>
<comment type="domain">
    <text evidence="1">The PRC barrel domain binds ribosomal protein uS19.</text>
</comment>
<comment type="similarity">
    <text evidence="1">Belongs to the RimM family.</text>
</comment>
<sequence length="231" mass="24918">MSERDSGSSGRAKAKRQPGAKAPFGPFVRKPVEKVEANAAAAQKARAESAESWPDDAVEVGAIVDAYGLKGWVKVAAHADAGHGGDALLSTKRWWLEKGRERQSTPCLQSKVHGDSIVAQLGGTADRDAALALRGHRVYVRRRDFPALGTDEYYWVDLVGLDVVNEAGIELGKVADLIDNGAQSVLRIEYPAIGKDGKPVIGERLIPFVGVYVKTVDQAAKKIIVDWEADY</sequence>
<dbReference type="EMBL" id="CP001043">
    <property type="protein sequence ID" value="ACC69959.1"/>
    <property type="molecule type" value="Genomic_DNA"/>
</dbReference>
<dbReference type="RefSeq" id="WP_012400179.1">
    <property type="nucleotide sequence ID" value="NC_010622.1"/>
</dbReference>
<dbReference type="SMR" id="B2JF30"/>
<dbReference type="STRING" id="391038.Bphy_0770"/>
<dbReference type="KEGG" id="bph:Bphy_0770"/>
<dbReference type="eggNOG" id="COG0806">
    <property type="taxonomic scope" value="Bacteria"/>
</dbReference>
<dbReference type="HOGENOM" id="CLU_077636_1_0_4"/>
<dbReference type="OrthoDB" id="9783509at2"/>
<dbReference type="Proteomes" id="UP000001192">
    <property type="component" value="Chromosome 1"/>
</dbReference>
<dbReference type="GO" id="GO:0005737">
    <property type="term" value="C:cytoplasm"/>
    <property type="evidence" value="ECO:0007669"/>
    <property type="project" value="UniProtKB-SubCell"/>
</dbReference>
<dbReference type="GO" id="GO:0005840">
    <property type="term" value="C:ribosome"/>
    <property type="evidence" value="ECO:0007669"/>
    <property type="project" value="InterPro"/>
</dbReference>
<dbReference type="GO" id="GO:0043022">
    <property type="term" value="F:ribosome binding"/>
    <property type="evidence" value="ECO:0007669"/>
    <property type="project" value="InterPro"/>
</dbReference>
<dbReference type="GO" id="GO:0042274">
    <property type="term" value="P:ribosomal small subunit biogenesis"/>
    <property type="evidence" value="ECO:0007669"/>
    <property type="project" value="UniProtKB-UniRule"/>
</dbReference>
<dbReference type="GO" id="GO:0006364">
    <property type="term" value="P:rRNA processing"/>
    <property type="evidence" value="ECO:0007669"/>
    <property type="project" value="UniProtKB-UniRule"/>
</dbReference>
<dbReference type="Gene3D" id="2.30.30.240">
    <property type="entry name" value="PRC-barrel domain"/>
    <property type="match status" value="1"/>
</dbReference>
<dbReference type="Gene3D" id="2.40.30.60">
    <property type="entry name" value="RimM"/>
    <property type="match status" value="1"/>
</dbReference>
<dbReference type="HAMAP" id="MF_00014">
    <property type="entry name" value="Ribosome_mat_RimM"/>
    <property type="match status" value="1"/>
</dbReference>
<dbReference type="InterPro" id="IPR011033">
    <property type="entry name" value="PRC_barrel-like_sf"/>
</dbReference>
<dbReference type="InterPro" id="IPR056792">
    <property type="entry name" value="PRC_RimM"/>
</dbReference>
<dbReference type="InterPro" id="IPR011961">
    <property type="entry name" value="RimM"/>
</dbReference>
<dbReference type="InterPro" id="IPR002676">
    <property type="entry name" value="RimM_N"/>
</dbReference>
<dbReference type="InterPro" id="IPR036976">
    <property type="entry name" value="RimM_N_sf"/>
</dbReference>
<dbReference type="InterPro" id="IPR009000">
    <property type="entry name" value="Transl_B-barrel_sf"/>
</dbReference>
<dbReference type="NCBIfam" id="TIGR02273">
    <property type="entry name" value="16S_RimM"/>
    <property type="match status" value="1"/>
</dbReference>
<dbReference type="PANTHER" id="PTHR33692">
    <property type="entry name" value="RIBOSOME MATURATION FACTOR RIMM"/>
    <property type="match status" value="1"/>
</dbReference>
<dbReference type="PANTHER" id="PTHR33692:SF1">
    <property type="entry name" value="RIBOSOME MATURATION FACTOR RIMM"/>
    <property type="match status" value="1"/>
</dbReference>
<dbReference type="Pfam" id="PF24986">
    <property type="entry name" value="PRC_RimM"/>
    <property type="match status" value="1"/>
</dbReference>
<dbReference type="Pfam" id="PF01782">
    <property type="entry name" value="RimM"/>
    <property type="match status" value="1"/>
</dbReference>
<dbReference type="SUPFAM" id="SSF50346">
    <property type="entry name" value="PRC-barrel domain"/>
    <property type="match status" value="1"/>
</dbReference>
<dbReference type="SUPFAM" id="SSF50447">
    <property type="entry name" value="Translation proteins"/>
    <property type="match status" value="1"/>
</dbReference>
<protein>
    <recommendedName>
        <fullName evidence="1">Ribosome maturation factor RimM</fullName>
    </recommendedName>
</protein>
<evidence type="ECO:0000255" key="1">
    <source>
        <dbReference type="HAMAP-Rule" id="MF_00014"/>
    </source>
</evidence>
<evidence type="ECO:0000256" key="2">
    <source>
        <dbReference type="SAM" id="MobiDB-lite"/>
    </source>
</evidence>
<proteinExistence type="inferred from homology"/>
<reference key="1">
    <citation type="journal article" date="2014" name="Stand. Genomic Sci.">
        <title>Complete genome sequence of Burkholderia phymatum STM815(T), a broad host range and efficient nitrogen-fixing symbiont of Mimosa species.</title>
        <authorList>
            <person name="Moulin L."/>
            <person name="Klonowska A."/>
            <person name="Caroline B."/>
            <person name="Booth K."/>
            <person name="Vriezen J.A."/>
            <person name="Melkonian R."/>
            <person name="James E.K."/>
            <person name="Young J.P."/>
            <person name="Bena G."/>
            <person name="Hauser L."/>
            <person name="Land M."/>
            <person name="Kyrpides N."/>
            <person name="Bruce D."/>
            <person name="Chain P."/>
            <person name="Copeland A."/>
            <person name="Pitluck S."/>
            <person name="Woyke T."/>
            <person name="Lizotte-Waniewski M."/>
            <person name="Bristow J."/>
            <person name="Riley M."/>
        </authorList>
    </citation>
    <scope>NUCLEOTIDE SEQUENCE [LARGE SCALE GENOMIC DNA]</scope>
    <source>
        <strain>DSM 17167 / CIP 108236 / LMG 21445 / STM815</strain>
    </source>
</reference>
<accession>B2JF30</accession>
<keyword id="KW-0143">Chaperone</keyword>
<keyword id="KW-0963">Cytoplasm</keyword>
<keyword id="KW-1185">Reference proteome</keyword>
<keyword id="KW-0690">Ribosome biogenesis</keyword>
<keyword id="KW-0698">rRNA processing</keyword>
<feature type="chain" id="PRO_0000351736" description="Ribosome maturation factor RimM">
    <location>
        <begin position="1"/>
        <end position="231"/>
    </location>
</feature>
<feature type="domain" description="PRC barrel" evidence="1">
    <location>
        <begin position="150"/>
        <end position="231"/>
    </location>
</feature>
<feature type="region of interest" description="Disordered" evidence="2">
    <location>
        <begin position="1"/>
        <end position="29"/>
    </location>
</feature>
<gene>
    <name evidence="1" type="primary">rimM</name>
    <name type="ordered locus">Bphy_0770</name>
</gene>